<gene>
    <name type="ordered locus">Nham_1654</name>
</gene>
<evidence type="ECO:0000255" key="1">
    <source>
        <dbReference type="HAMAP-Rule" id="MF_00386"/>
    </source>
</evidence>
<comment type="function">
    <text evidence="1">Could be involved in insertion of integral membrane proteins into the membrane.</text>
</comment>
<comment type="subcellular location">
    <subcellularLocation>
        <location evidence="1">Cell inner membrane</location>
        <topology evidence="1">Peripheral membrane protein</topology>
        <orientation evidence="1">Cytoplasmic side</orientation>
    </subcellularLocation>
</comment>
<comment type="similarity">
    <text evidence="1">Belongs to the UPF0161 family.</text>
</comment>
<reference key="1">
    <citation type="submission" date="2006-03" db="EMBL/GenBank/DDBJ databases">
        <title>Complete sequence of chromosome of Nitrobacter hamburgensis X14.</title>
        <authorList>
            <consortium name="US DOE Joint Genome Institute"/>
            <person name="Copeland A."/>
            <person name="Lucas S."/>
            <person name="Lapidus A."/>
            <person name="Barry K."/>
            <person name="Detter J.C."/>
            <person name="Glavina del Rio T."/>
            <person name="Hammon N."/>
            <person name="Israni S."/>
            <person name="Dalin E."/>
            <person name="Tice H."/>
            <person name="Pitluck S."/>
            <person name="Chain P."/>
            <person name="Malfatti S."/>
            <person name="Shin M."/>
            <person name="Vergez L."/>
            <person name="Schmutz J."/>
            <person name="Larimer F."/>
            <person name="Land M."/>
            <person name="Hauser L."/>
            <person name="Kyrpides N."/>
            <person name="Ivanova N."/>
            <person name="Ward B."/>
            <person name="Arp D."/>
            <person name="Klotz M."/>
            <person name="Stein L."/>
            <person name="O'Mullan G."/>
            <person name="Starkenburg S."/>
            <person name="Sayavedra L."/>
            <person name="Poret-Peterson A.T."/>
            <person name="Gentry M.E."/>
            <person name="Bruce D."/>
            <person name="Richardson P."/>
        </authorList>
    </citation>
    <scope>NUCLEOTIDE SEQUENCE [LARGE SCALE GENOMIC DNA]</scope>
    <source>
        <strain>DSM 10229 / NCIMB 13809 / X14</strain>
    </source>
</reference>
<proteinExistence type="inferred from homology"/>
<keyword id="KW-0997">Cell inner membrane</keyword>
<keyword id="KW-1003">Cell membrane</keyword>
<keyword id="KW-0472">Membrane</keyword>
<keyword id="KW-1185">Reference proteome</keyword>
<name>YIDD_NITHX</name>
<organism>
    <name type="scientific">Nitrobacter hamburgensis (strain DSM 10229 / NCIMB 13809 / X14)</name>
    <dbReference type="NCBI Taxonomy" id="323097"/>
    <lineage>
        <taxon>Bacteria</taxon>
        <taxon>Pseudomonadati</taxon>
        <taxon>Pseudomonadota</taxon>
        <taxon>Alphaproteobacteria</taxon>
        <taxon>Hyphomicrobiales</taxon>
        <taxon>Nitrobacteraceae</taxon>
        <taxon>Nitrobacter</taxon>
    </lineage>
</organism>
<sequence length="114" mass="12894">MKPTRQSSIHCADCARAALRLPRNSGRALIWIYRHTLSPLVGFNCRHLPTCSVYGDEAIERFGLWGGGWMTLARLLRCQPWGTSGIDNVPATKPPGASWYRPWRYGRWRGVNAP</sequence>
<protein>
    <recommendedName>
        <fullName evidence="1">Putative membrane protein insertion efficiency factor</fullName>
    </recommendedName>
</protein>
<accession>Q1QMS6</accession>
<dbReference type="EMBL" id="CP000319">
    <property type="protein sequence ID" value="ABE62471.1"/>
    <property type="molecule type" value="Genomic_DNA"/>
</dbReference>
<dbReference type="RefSeq" id="WP_011510153.1">
    <property type="nucleotide sequence ID" value="NC_007964.1"/>
</dbReference>
<dbReference type="STRING" id="323097.Nham_1654"/>
<dbReference type="KEGG" id="nha:Nham_1654"/>
<dbReference type="eggNOG" id="COG0759">
    <property type="taxonomic scope" value="Bacteria"/>
</dbReference>
<dbReference type="HOGENOM" id="CLU_144811_0_0_5"/>
<dbReference type="OrthoDB" id="9801753at2"/>
<dbReference type="Proteomes" id="UP000001953">
    <property type="component" value="Chromosome"/>
</dbReference>
<dbReference type="GO" id="GO:0005886">
    <property type="term" value="C:plasma membrane"/>
    <property type="evidence" value="ECO:0007669"/>
    <property type="project" value="UniProtKB-SubCell"/>
</dbReference>
<dbReference type="HAMAP" id="MF_00386">
    <property type="entry name" value="UPF0161_YidD"/>
    <property type="match status" value="1"/>
</dbReference>
<dbReference type="InterPro" id="IPR002696">
    <property type="entry name" value="Membr_insert_effic_factor_YidD"/>
</dbReference>
<dbReference type="NCBIfam" id="TIGR00278">
    <property type="entry name" value="membrane protein insertion efficiency factor YidD"/>
    <property type="match status" value="1"/>
</dbReference>
<dbReference type="PANTHER" id="PTHR33383">
    <property type="entry name" value="MEMBRANE PROTEIN INSERTION EFFICIENCY FACTOR-RELATED"/>
    <property type="match status" value="1"/>
</dbReference>
<dbReference type="PANTHER" id="PTHR33383:SF1">
    <property type="entry name" value="MEMBRANE PROTEIN INSERTION EFFICIENCY FACTOR-RELATED"/>
    <property type="match status" value="1"/>
</dbReference>
<dbReference type="Pfam" id="PF01809">
    <property type="entry name" value="YidD"/>
    <property type="match status" value="1"/>
</dbReference>
<dbReference type="SMART" id="SM01234">
    <property type="entry name" value="Haemolytic"/>
    <property type="match status" value="1"/>
</dbReference>
<feature type="chain" id="PRO_0000253130" description="Putative membrane protein insertion efficiency factor">
    <location>
        <begin position="1"/>
        <end position="114"/>
    </location>
</feature>